<comment type="function">
    <text evidence="1">Involved in transcription antitermination. Required for transcription of ribosomal RNA (rRNA) genes. Binds specifically to the boxA antiterminator sequence of the ribosomal RNA (rrn) operons.</text>
</comment>
<comment type="similarity">
    <text evidence="1">Belongs to the NusB family.</text>
</comment>
<protein>
    <recommendedName>
        <fullName evidence="1">Transcription antitermination protein NusB</fullName>
    </recommendedName>
    <alternativeName>
        <fullName evidence="1">Antitermination factor NusB</fullName>
    </alternativeName>
</protein>
<accession>A0LUG6</accession>
<name>NUSB_ACIC1</name>
<organism>
    <name type="scientific">Acidothermus cellulolyticus (strain ATCC 43068 / DSM 8971 / 11B)</name>
    <dbReference type="NCBI Taxonomy" id="351607"/>
    <lineage>
        <taxon>Bacteria</taxon>
        <taxon>Bacillati</taxon>
        <taxon>Actinomycetota</taxon>
        <taxon>Actinomycetes</taxon>
        <taxon>Acidothermales</taxon>
        <taxon>Acidothermaceae</taxon>
        <taxon>Acidothermus</taxon>
    </lineage>
</organism>
<proteinExistence type="inferred from homology"/>
<dbReference type="EMBL" id="CP000481">
    <property type="protein sequence ID" value="ABK53076.1"/>
    <property type="molecule type" value="Genomic_DNA"/>
</dbReference>
<dbReference type="RefSeq" id="WP_011720139.1">
    <property type="nucleotide sequence ID" value="NC_008578.1"/>
</dbReference>
<dbReference type="SMR" id="A0LUG6"/>
<dbReference type="FunCoup" id="A0LUG6">
    <property type="interactions" value="43"/>
</dbReference>
<dbReference type="STRING" id="351607.Acel_1304"/>
<dbReference type="KEGG" id="ace:Acel_1304"/>
<dbReference type="eggNOG" id="COG0781">
    <property type="taxonomic scope" value="Bacteria"/>
</dbReference>
<dbReference type="HOGENOM" id="CLU_087843_2_3_11"/>
<dbReference type="InParanoid" id="A0LUG6"/>
<dbReference type="OrthoDB" id="3528057at2"/>
<dbReference type="Proteomes" id="UP000008221">
    <property type="component" value="Chromosome"/>
</dbReference>
<dbReference type="GO" id="GO:0005829">
    <property type="term" value="C:cytosol"/>
    <property type="evidence" value="ECO:0007669"/>
    <property type="project" value="TreeGrafter"/>
</dbReference>
<dbReference type="GO" id="GO:0003723">
    <property type="term" value="F:RNA binding"/>
    <property type="evidence" value="ECO:0007669"/>
    <property type="project" value="UniProtKB-UniRule"/>
</dbReference>
<dbReference type="GO" id="GO:0006353">
    <property type="term" value="P:DNA-templated transcription termination"/>
    <property type="evidence" value="ECO:0007669"/>
    <property type="project" value="UniProtKB-UniRule"/>
</dbReference>
<dbReference type="GO" id="GO:0031564">
    <property type="term" value="P:transcription antitermination"/>
    <property type="evidence" value="ECO:0007669"/>
    <property type="project" value="UniProtKB-KW"/>
</dbReference>
<dbReference type="Gene3D" id="1.10.940.10">
    <property type="entry name" value="NusB-like"/>
    <property type="match status" value="1"/>
</dbReference>
<dbReference type="HAMAP" id="MF_00073">
    <property type="entry name" value="NusB"/>
    <property type="match status" value="1"/>
</dbReference>
<dbReference type="InterPro" id="IPR035926">
    <property type="entry name" value="NusB-like_sf"/>
</dbReference>
<dbReference type="InterPro" id="IPR011605">
    <property type="entry name" value="NusB_fam"/>
</dbReference>
<dbReference type="InterPro" id="IPR006027">
    <property type="entry name" value="NusB_RsmB_TIM44"/>
</dbReference>
<dbReference type="NCBIfam" id="TIGR01951">
    <property type="entry name" value="nusB"/>
    <property type="match status" value="1"/>
</dbReference>
<dbReference type="PANTHER" id="PTHR11078:SF3">
    <property type="entry name" value="ANTITERMINATION NUSB DOMAIN-CONTAINING PROTEIN"/>
    <property type="match status" value="1"/>
</dbReference>
<dbReference type="PANTHER" id="PTHR11078">
    <property type="entry name" value="N UTILIZATION SUBSTANCE PROTEIN B-RELATED"/>
    <property type="match status" value="1"/>
</dbReference>
<dbReference type="Pfam" id="PF01029">
    <property type="entry name" value="NusB"/>
    <property type="match status" value="1"/>
</dbReference>
<dbReference type="SUPFAM" id="SSF48013">
    <property type="entry name" value="NusB-like"/>
    <property type="match status" value="1"/>
</dbReference>
<feature type="chain" id="PRO_1000023700" description="Transcription antitermination protein NusB">
    <location>
        <begin position="1"/>
        <end position="145"/>
    </location>
</feature>
<keyword id="KW-1185">Reference proteome</keyword>
<keyword id="KW-0694">RNA-binding</keyword>
<keyword id="KW-0804">Transcription</keyword>
<keyword id="KW-0889">Transcription antitermination</keyword>
<keyword id="KW-0805">Transcription regulation</keyword>
<evidence type="ECO:0000255" key="1">
    <source>
        <dbReference type="HAMAP-Rule" id="MF_00073"/>
    </source>
</evidence>
<reference key="1">
    <citation type="journal article" date="2009" name="Genome Res.">
        <title>Complete genome of the cellulolytic thermophile Acidothermus cellulolyticus 11B provides insights into its ecophysiological and evolutionary adaptations.</title>
        <authorList>
            <person name="Barabote R.D."/>
            <person name="Xie G."/>
            <person name="Leu D.H."/>
            <person name="Normand P."/>
            <person name="Necsulea A."/>
            <person name="Daubin V."/>
            <person name="Medigue C."/>
            <person name="Adney W.S."/>
            <person name="Xu X.C."/>
            <person name="Lapidus A."/>
            <person name="Parales R.E."/>
            <person name="Detter C."/>
            <person name="Pujic P."/>
            <person name="Bruce D."/>
            <person name="Lavire C."/>
            <person name="Challacombe J.F."/>
            <person name="Brettin T.S."/>
            <person name="Berry A.M."/>
        </authorList>
    </citation>
    <scope>NUCLEOTIDE SEQUENCE [LARGE SCALE GENOMIC DNA]</scope>
    <source>
        <strain>ATCC 43068 / DSM 8971 / 11B</strain>
    </source>
</reference>
<sequence length="145" mass="15755">MPARTKARKRALDVLFEADLRAADPLEILADHTARADTPVPEYAVRLVEGVAAHRAEIDRIIEQFAVGWTLQRMPTVDRNILRLAIYELLWVTEVPDAVVLAEAVKLAQDLSTAESAPFVNGVLAAVRANQATVTASPPPGEPPD</sequence>
<gene>
    <name evidence="1" type="primary">nusB</name>
    <name type="ordered locus">Acel_1304</name>
</gene>